<reference key="1">
    <citation type="journal article" date="2005" name="Proc. Natl. Acad. Sci. U.S.A.">
        <title>The complete genome sequence of Mycobacterium avium subspecies paratuberculosis.</title>
        <authorList>
            <person name="Li L."/>
            <person name="Bannantine J.P."/>
            <person name="Zhang Q."/>
            <person name="Amonsin A."/>
            <person name="May B.J."/>
            <person name="Alt D."/>
            <person name="Banerji N."/>
            <person name="Kanjilal S."/>
            <person name="Kapur V."/>
        </authorList>
    </citation>
    <scope>NUCLEOTIDE SEQUENCE [LARGE SCALE GENOMIC DNA]</scope>
    <source>
        <strain>ATCC BAA-968 / K-10</strain>
    </source>
</reference>
<dbReference type="EMBL" id="AE016958">
    <property type="protein sequence ID" value="AAS06318.1"/>
    <property type="molecule type" value="Genomic_DNA"/>
</dbReference>
<dbReference type="RefSeq" id="WP_003873956.1">
    <property type="nucleotide sequence ID" value="NZ_CP106873.1"/>
</dbReference>
<dbReference type="SMR" id="Q73TF0"/>
<dbReference type="STRING" id="262316.MAP_3768c"/>
<dbReference type="KEGG" id="mpa:MAP_3768c"/>
<dbReference type="eggNOG" id="COG0199">
    <property type="taxonomic scope" value="Bacteria"/>
</dbReference>
<dbReference type="HOGENOM" id="CLU_139869_0_1_11"/>
<dbReference type="Proteomes" id="UP000000580">
    <property type="component" value="Chromosome"/>
</dbReference>
<dbReference type="GO" id="GO:0015935">
    <property type="term" value="C:small ribosomal subunit"/>
    <property type="evidence" value="ECO:0007669"/>
    <property type="project" value="TreeGrafter"/>
</dbReference>
<dbReference type="GO" id="GO:0019843">
    <property type="term" value="F:rRNA binding"/>
    <property type="evidence" value="ECO:0007669"/>
    <property type="project" value="UniProtKB-UniRule"/>
</dbReference>
<dbReference type="GO" id="GO:0003735">
    <property type="term" value="F:structural constituent of ribosome"/>
    <property type="evidence" value="ECO:0007669"/>
    <property type="project" value="InterPro"/>
</dbReference>
<dbReference type="GO" id="GO:0006412">
    <property type="term" value="P:translation"/>
    <property type="evidence" value="ECO:0007669"/>
    <property type="project" value="UniProtKB-UniRule"/>
</dbReference>
<dbReference type="FunFam" id="1.10.287.1480:FF:000001">
    <property type="entry name" value="30S ribosomal protein S14"/>
    <property type="match status" value="1"/>
</dbReference>
<dbReference type="Gene3D" id="1.10.287.1480">
    <property type="match status" value="1"/>
</dbReference>
<dbReference type="HAMAP" id="MF_00537">
    <property type="entry name" value="Ribosomal_uS14_1"/>
    <property type="match status" value="1"/>
</dbReference>
<dbReference type="InterPro" id="IPR001209">
    <property type="entry name" value="Ribosomal_uS14"/>
</dbReference>
<dbReference type="InterPro" id="IPR023036">
    <property type="entry name" value="Ribosomal_uS14_bac/plastid"/>
</dbReference>
<dbReference type="NCBIfam" id="NF006477">
    <property type="entry name" value="PRK08881.1"/>
    <property type="match status" value="1"/>
</dbReference>
<dbReference type="PANTHER" id="PTHR19836">
    <property type="entry name" value="30S RIBOSOMAL PROTEIN S14"/>
    <property type="match status" value="1"/>
</dbReference>
<dbReference type="PANTHER" id="PTHR19836:SF23">
    <property type="entry name" value="SMALL RIBOSOMAL SUBUNIT PROTEIN US14A"/>
    <property type="match status" value="1"/>
</dbReference>
<dbReference type="Pfam" id="PF00253">
    <property type="entry name" value="Ribosomal_S14"/>
    <property type="match status" value="1"/>
</dbReference>
<dbReference type="SUPFAM" id="SSF57716">
    <property type="entry name" value="Glucocorticoid receptor-like (DNA-binding domain)"/>
    <property type="match status" value="1"/>
</dbReference>
<accession>Q73TF0</accession>
<keyword id="KW-1185">Reference proteome</keyword>
<keyword id="KW-0687">Ribonucleoprotein</keyword>
<keyword id="KW-0689">Ribosomal protein</keyword>
<keyword id="KW-0694">RNA-binding</keyword>
<keyword id="KW-0699">rRNA-binding</keyword>
<organism>
    <name type="scientific">Mycolicibacterium paratuberculosis (strain ATCC BAA-968 / K-10)</name>
    <name type="common">Mycobacterium paratuberculosis</name>
    <dbReference type="NCBI Taxonomy" id="262316"/>
    <lineage>
        <taxon>Bacteria</taxon>
        <taxon>Bacillati</taxon>
        <taxon>Actinomycetota</taxon>
        <taxon>Actinomycetes</taxon>
        <taxon>Mycobacteriales</taxon>
        <taxon>Mycobacteriaceae</taxon>
        <taxon>Mycobacterium</taxon>
        <taxon>Mycobacterium avium complex (MAC)</taxon>
    </lineage>
</organism>
<name>RS14_MYCPA</name>
<gene>
    <name evidence="1" type="primary">rpsN</name>
    <name type="synonym">rpsN2</name>
    <name type="ordered locus">MAP_3768c</name>
</gene>
<proteinExistence type="inferred from homology"/>
<sequence>MAKKSKIVKNDRRRATVARYAERRAELKEIIRSPRSTPEQRTAAQNELAHQPRDASAVRVRNRDAVDGRPRGHLRKFGLSRVRVRELAHAGQLPGVRKASW</sequence>
<protein>
    <recommendedName>
        <fullName evidence="1">Small ribosomal subunit protein uS14A</fullName>
    </recommendedName>
    <alternativeName>
        <fullName evidence="3">30S ribosomal protein S14</fullName>
    </alternativeName>
</protein>
<evidence type="ECO:0000255" key="1">
    <source>
        <dbReference type="HAMAP-Rule" id="MF_00537"/>
    </source>
</evidence>
<evidence type="ECO:0000256" key="2">
    <source>
        <dbReference type="SAM" id="MobiDB-lite"/>
    </source>
</evidence>
<evidence type="ECO:0000305" key="3"/>
<feature type="chain" id="PRO_0000269053" description="Small ribosomal subunit protein uS14A">
    <location>
        <begin position="1"/>
        <end position="101"/>
    </location>
</feature>
<feature type="region of interest" description="Disordered" evidence="2">
    <location>
        <begin position="29"/>
        <end position="60"/>
    </location>
</feature>
<feature type="compositionally biased region" description="Polar residues" evidence="2">
    <location>
        <begin position="34"/>
        <end position="45"/>
    </location>
</feature>
<comment type="function">
    <text evidence="1">Binds 16S rRNA, required for the assembly of 30S particles and may also be responsible for determining the conformation of the 16S rRNA at the A site.</text>
</comment>
<comment type="subunit">
    <text evidence="1">Part of the 30S ribosomal subunit. Contacts proteins S3 and S10.</text>
</comment>
<comment type="similarity">
    <text evidence="1">Belongs to the universal ribosomal protein uS14 family.</text>
</comment>